<keyword id="KW-0004">4Fe-4S</keyword>
<keyword id="KW-0963">Cytoplasm</keyword>
<keyword id="KW-0408">Iron</keyword>
<keyword id="KW-0411">Iron-sulfur</keyword>
<keyword id="KW-0479">Metal-binding</keyword>
<keyword id="KW-0949">S-adenosyl-L-methionine</keyword>
<keyword id="KW-0808">Transferase</keyword>
<evidence type="ECO:0000255" key="1">
    <source>
        <dbReference type="HAMAP-Rule" id="MF_00206"/>
    </source>
</evidence>
<evidence type="ECO:0000255" key="2">
    <source>
        <dbReference type="PROSITE-ProRule" id="PRU01266"/>
    </source>
</evidence>
<name>LIPA_CUTAK</name>
<proteinExistence type="inferred from homology"/>
<comment type="function">
    <text evidence="1">Catalyzes the radical-mediated insertion of two sulfur atoms into the C-6 and C-8 positions of the octanoyl moiety bound to the lipoyl domains of lipoate-dependent enzymes, thereby converting the octanoylated domains into lipoylated derivatives.</text>
</comment>
<comment type="catalytic activity">
    <reaction evidence="1">
        <text>[[Fe-S] cluster scaffold protein carrying a second [4Fe-4S](2+) cluster] + N(6)-octanoyl-L-lysyl-[protein] + 2 oxidized [2Fe-2S]-[ferredoxin] + 2 S-adenosyl-L-methionine + 4 H(+) = [[Fe-S] cluster scaffold protein] + N(6)-[(R)-dihydrolipoyl]-L-lysyl-[protein] + 4 Fe(3+) + 2 hydrogen sulfide + 2 5'-deoxyadenosine + 2 L-methionine + 2 reduced [2Fe-2S]-[ferredoxin]</text>
        <dbReference type="Rhea" id="RHEA:16585"/>
        <dbReference type="Rhea" id="RHEA-COMP:9928"/>
        <dbReference type="Rhea" id="RHEA-COMP:10000"/>
        <dbReference type="Rhea" id="RHEA-COMP:10001"/>
        <dbReference type="Rhea" id="RHEA-COMP:10475"/>
        <dbReference type="Rhea" id="RHEA-COMP:14568"/>
        <dbReference type="Rhea" id="RHEA-COMP:14569"/>
        <dbReference type="ChEBI" id="CHEBI:15378"/>
        <dbReference type="ChEBI" id="CHEBI:17319"/>
        <dbReference type="ChEBI" id="CHEBI:29034"/>
        <dbReference type="ChEBI" id="CHEBI:29919"/>
        <dbReference type="ChEBI" id="CHEBI:33722"/>
        <dbReference type="ChEBI" id="CHEBI:33737"/>
        <dbReference type="ChEBI" id="CHEBI:33738"/>
        <dbReference type="ChEBI" id="CHEBI:57844"/>
        <dbReference type="ChEBI" id="CHEBI:59789"/>
        <dbReference type="ChEBI" id="CHEBI:78809"/>
        <dbReference type="ChEBI" id="CHEBI:83100"/>
        <dbReference type="EC" id="2.8.1.8"/>
    </reaction>
</comment>
<comment type="cofactor">
    <cofactor evidence="1">
        <name>[4Fe-4S] cluster</name>
        <dbReference type="ChEBI" id="CHEBI:49883"/>
    </cofactor>
    <text evidence="1">Binds 2 [4Fe-4S] clusters per subunit. One cluster is coordinated with 3 cysteines and an exchangeable S-adenosyl-L-methionine.</text>
</comment>
<comment type="pathway">
    <text evidence="1">Protein modification; protein lipoylation via endogenous pathway; protein N(6)-(lipoyl)lysine from octanoyl-[acyl-carrier-protein]: step 2/2.</text>
</comment>
<comment type="subcellular location">
    <subcellularLocation>
        <location evidence="1">Cytoplasm</location>
    </subcellularLocation>
</comment>
<comment type="similarity">
    <text evidence="1">Belongs to the radical SAM superfamily. Lipoyl synthase family.</text>
</comment>
<reference key="1">
    <citation type="journal article" date="2004" name="Science">
        <title>The complete genome sequence of Propionibacterium acnes, a commensal of human skin.</title>
        <authorList>
            <person name="Brueggemann H."/>
            <person name="Henne A."/>
            <person name="Hoster F."/>
            <person name="Liesegang H."/>
            <person name="Wiezer A."/>
            <person name="Strittmatter A."/>
            <person name="Hujer S."/>
            <person name="Duerre P."/>
            <person name="Gottschalk G."/>
        </authorList>
    </citation>
    <scope>NUCLEOTIDE SEQUENCE [LARGE SCALE GENOMIC DNA]</scope>
    <source>
        <strain>DSM 16379 / KPA171202</strain>
    </source>
</reference>
<protein>
    <recommendedName>
        <fullName evidence="1">Lipoyl synthase</fullName>
        <ecNumber evidence="1">2.8.1.8</ecNumber>
    </recommendedName>
    <alternativeName>
        <fullName evidence="1">Lip-syn</fullName>
        <shortName evidence="1">LS</shortName>
    </alternativeName>
    <alternativeName>
        <fullName evidence="1">Lipoate synthase</fullName>
    </alternativeName>
    <alternativeName>
        <fullName evidence="1">Lipoic acid synthase</fullName>
    </alternativeName>
    <alternativeName>
        <fullName evidence="1">Sulfur insertion protein LipA</fullName>
    </alternativeName>
</protein>
<feature type="chain" id="PRO_1000012254" description="Lipoyl synthase">
    <location>
        <begin position="1"/>
        <end position="330"/>
    </location>
</feature>
<feature type="domain" description="Radical SAM core" evidence="2">
    <location>
        <begin position="67"/>
        <end position="281"/>
    </location>
</feature>
<feature type="binding site" evidence="1">
    <location>
        <position position="55"/>
    </location>
    <ligand>
        <name>[4Fe-4S] cluster</name>
        <dbReference type="ChEBI" id="CHEBI:49883"/>
        <label>1</label>
    </ligand>
</feature>
<feature type="binding site" evidence="1">
    <location>
        <position position="60"/>
    </location>
    <ligand>
        <name>[4Fe-4S] cluster</name>
        <dbReference type="ChEBI" id="CHEBI:49883"/>
        <label>1</label>
    </ligand>
</feature>
<feature type="binding site" evidence="1">
    <location>
        <position position="66"/>
    </location>
    <ligand>
        <name>[4Fe-4S] cluster</name>
        <dbReference type="ChEBI" id="CHEBI:49883"/>
        <label>1</label>
    </ligand>
</feature>
<feature type="binding site" evidence="1">
    <location>
        <position position="81"/>
    </location>
    <ligand>
        <name>[4Fe-4S] cluster</name>
        <dbReference type="ChEBI" id="CHEBI:49883"/>
        <label>2</label>
        <note>4Fe-4S-S-AdoMet</note>
    </ligand>
</feature>
<feature type="binding site" evidence="1">
    <location>
        <position position="85"/>
    </location>
    <ligand>
        <name>[4Fe-4S] cluster</name>
        <dbReference type="ChEBI" id="CHEBI:49883"/>
        <label>2</label>
        <note>4Fe-4S-S-AdoMet</note>
    </ligand>
</feature>
<feature type="binding site" evidence="1">
    <location>
        <position position="88"/>
    </location>
    <ligand>
        <name>[4Fe-4S] cluster</name>
        <dbReference type="ChEBI" id="CHEBI:49883"/>
        <label>2</label>
        <note>4Fe-4S-S-AdoMet</note>
    </ligand>
</feature>
<feature type="binding site" evidence="1">
    <location>
        <position position="292"/>
    </location>
    <ligand>
        <name>[4Fe-4S] cluster</name>
        <dbReference type="ChEBI" id="CHEBI:49883"/>
        <label>1</label>
    </ligand>
</feature>
<organism>
    <name type="scientific">Cutibacterium acnes (strain DSM 16379 / KPA171202)</name>
    <name type="common">Propionibacterium acnes</name>
    <dbReference type="NCBI Taxonomy" id="267747"/>
    <lineage>
        <taxon>Bacteria</taxon>
        <taxon>Bacillati</taxon>
        <taxon>Actinomycetota</taxon>
        <taxon>Actinomycetes</taxon>
        <taxon>Propionibacteriales</taxon>
        <taxon>Propionibacteriaceae</taxon>
        <taxon>Cutibacterium</taxon>
    </lineage>
</organism>
<sequence length="330" mass="37521">MSVEADGRKLLRVEVKNSQTPIENKPHWIKTRATMGPEYRDMRRRMIDGDLHTVCQEAGCPNIFECWEDREATFLIGGDHCTRRCDFCQIESAKPEGYDKDEPRRVAESVKQMGLRYATVTSVCRDDLEDEGAWLCAETIRQIHQVTPGVGVEMLAQDFSGKQDLLDIVFEARPEVFGHNLETVPRIFKRIRPGFRYDRSLAVLDSAHEAGLITKSNLILGMGETREEISQAMRALHDANTDLLTITQYLRPNSYLHPIDRWVTPQEFDELAEEAREIGFVGVMSGPLVRSSYRAGRLYRQAMEARGERPVMIVTGYRDGAKPAPFAAKE</sequence>
<accession>Q6A9X0</accession>
<gene>
    <name evidence="1" type="primary">lipA</name>
    <name type="ordered locus">PPA0689</name>
</gene>
<dbReference type="EC" id="2.8.1.8" evidence="1"/>
<dbReference type="EMBL" id="AE017283">
    <property type="protein sequence ID" value="AAT82446.1"/>
    <property type="molecule type" value="Genomic_DNA"/>
</dbReference>
<dbReference type="RefSeq" id="WP_002518265.1">
    <property type="nucleotide sequence ID" value="NZ_CP025935.1"/>
</dbReference>
<dbReference type="SMR" id="Q6A9X0"/>
<dbReference type="EnsemblBacteria" id="AAT82446">
    <property type="protein sequence ID" value="AAT82446"/>
    <property type="gene ID" value="PPA0689"/>
</dbReference>
<dbReference type="KEGG" id="pac:PPA0689"/>
<dbReference type="PATRIC" id="fig|267747.3.peg.723"/>
<dbReference type="eggNOG" id="COG0320">
    <property type="taxonomic scope" value="Bacteria"/>
</dbReference>
<dbReference type="HOGENOM" id="CLU_033144_2_1_11"/>
<dbReference type="UniPathway" id="UPA00538">
    <property type="reaction ID" value="UER00593"/>
</dbReference>
<dbReference type="Proteomes" id="UP000000603">
    <property type="component" value="Chromosome"/>
</dbReference>
<dbReference type="GO" id="GO:0005737">
    <property type="term" value="C:cytoplasm"/>
    <property type="evidence" value="ECO:0007669"/>
    <property type="project" value="UniProtKB-SubCell"/>
</dbReference>
<dbReference type="GO" id="GO:0051539">
    <property type="term" value="F:4 iron, 4 sulfur cluster binding"/>
    <property type="evidence" value="ECO:0007669"/>
    <property type="project" value="UniProtKB-UniRule"/>
</dbReference>
<dbReference type="GO" id="GO:0016992">
    <property type="term" value="F:lipoate synthase activity"/>
    <property type="evidence" value="ECO:0007669"/>
    <property type="project" value="UniProtKB-UniRule"/>
</dbReference>
<dbReference type="GO" id="GO:0046872">
    <property type="term" value="F:metal ion binding"/>
    <property type="evidence" value="ECO:0007669"/>
    <property type="project" value="UniProtKB-KW"/>
</dbReference>
<dbReference type="CDD" id="cd01335">
    <property type="entry name" value="Radical_SAM"/>
    <property type="match status" value="1"/>
</dbReference>
<dbReference type="Gene3D" id="3.20.20.70">
    <property type="entry name" value="Aldolase class I"/>
    <property type="match status" value="1"/>
</dbReference>
<dbReference type="HAMAP" id="MF_00206">
    <property type="entry name" value="Lipoyl_synth"/>
    <property type="match status" value="1"/>
</dbReference>
<dbReference type="InterPro" id="IPR013785">
    <property type="entry name" value="Aldolase_TIM"/>
</dbReference>
<dbReference type="InterPro" id="IPR006638">
    <property type="entry name" value="Elp3/MiaA/NifB-like_rSAM"/>
</dbReference>
<dbReference type="InterPro" id="IPR031691">
    <property type="entry name" value="LIAS_N"/>
</dbReference>
<dbReference type="InterPro" id="IPR003698">
    <property type="entry name" value="Lipoyl_synth"/>
</dbReference>
<dbReference type="InterPro" id="IPR007197">
    <property type="entry name" value="rSAM"/>
</dbReference>
<dbReference type="NCBIfam" id="TIGR00510">
    <property type="entry name" value="lipA"/>
    <property type="match status" value="1"/>
</dbReference>
<dbReference type="NCBIfam" id="NF004019">
    <property type="entry name" value="PRK05481.1"/>
    <property type="match status" value="1"/>
</dbReference>
<dbReference type="NCBIfam" id="NF009544">
    <property type="entry name" value="PRK12928.1"/>
    <property type="match status" value="1"/>
</dbReference>
<dbReference type="PANTHER" id="PTHR10949">
    <property type="entry name" value="LIPOYL SYNTHASE"/>
    <property type="match status" value="1"/>
</dbReference>
<dbReference type="PANTHER" id="PTHR10949:SF0">
    <property type="entry name" value="LIPOYL SYNTHASE, MITOCHONDRIAL"/>
    <property type="match status" value="1"/>
</dbReference>
<dbReference type="Pfam" id="PF16881">
    <property type="entry name" value="LIAS_N"/>
    <property type="match status" value="1"/>
</dbReference>
<dbReference type="Pfam" id="PF04055">
    <property type="entry name" value="Radical_SAM"/>
    <property type="match status" value="1"/>
</dbReference>
<dbReference type="PIRSF" id="PIRSF005963">
    <property type="entry name" value="Lipoyl_synth"/>
    <property type="match status" value="1"/>
</dbReference>
<dbReference type="SFLD" id="SFLDF00271">
    <property type="entry name" value="lipoyl_synthase"/>
    <property type="match status" value="1"/>
</dbReference>
<dbReference type="SFLD" id="SFLDS00029">
    <property type="entry name" value="Radical_SAM"/>
    <property type="match status" value="1"/>
</dbReference>
<dbReference type="SMART" id="SM00729">
    <property type="entry name" value="Elp3"/>
    <property type="match status" value="1"/>
</dbReference>
<dbReference type="SUPFAM" id="SSF102114">
    <property type="entry name" value="Radical SAM enzymes"/>
    <property type="match status" value="1"/>
</dbReference>
<dbReference type="PROSITE" id="PS51918">
    <property type="entry name" value="RADICAL_SAM"/>
    <property type="match status" value="1"/>
</dbReference>